<sequence>MSEESFDDTNKAFENEKDIILEKIVKDENNLNNCSNMINMDDVENMKKELYVLHKKDEEIENNVDCFSGDKYNVENVINLKKKKKKDEDTDSSYYKTTLDEVYDTSDISTDEMLSNYSSSEDNNNIEMNIINDFYLKDDNTYCLEWNSDIINVLSEEIKEKEKLLEDENKDICNMKSRFLKLEKYVNIKKKKIINIKKNIEEKRKIEFDEKEIFKCLQIKNDFLKKENKKIELEREKNNKKIIETQNNITTCQKNIDDIKKELILKENELNDFINKIKIIQQEEYEIEKIKLSKDKEIQNVSYNLEKYNNEKIQQDKKYEQVKMNNMKFDIELKSIIQEYYDIKKDIKNISNKYICIMDMIKCRDKTIYKFEKDYTKTIHKEKQLQNKCLHKQNLINTQKDKNIILNNQIKKIQFDINKIRKELNDKQMSYDKTIIDRDHLNKEYEYEIVEIKEKLQEEKKSLENTLQHLNETYITMSTNYEESKNEYEKEQVNNIEKNDLIKSSEQILVQLQNKLQKLLDEIKSLDLEKFQLTQTLQVIKNDYITLEADVLGTQIKIKQIKSNIKKTEKELERQKEMLYKFDFQTQVLTKKINMISGISTFEKKKENQKKIILLEKELYKNEDIYNTLNNEMKRINIEIKNIKLYQNELQEQKMNYKNLYEKLQLEIKSLESTINNEIKEKENIMLIELNLKIELDKLKSTFSKHVDNLNICKKEKKENMNNAKLSEQDINAHMESLKVIIKNINDEIHKLNIQLYEKKNKSNNLQLKLNSIIICNQKNKDQKDICPNENQHIYYKMKIDQDIINLKEQLKKINEQIDKENIETKNFQRTLDDIIQTNKEFNDNIKSIDPQYKILLKKKNKLNKKWEQINDHINNLETNINDYNKKIKEGDSQLNNIQLQCENIEQKINKIKESNLKVENNINDLFIKIERASNQLKKNLAPTTNMMKLKNKQIKDDENNLSNNNNNNNNNNNNINVNVNVNCEPVPLEKHIFKQIQMESLKEKLSLLMECFKNNIDNVIMKEVFNLIETAE</sequence>
<dbReference type="EMBL" id="AL844507">
    <property type="protein sequence ID" value="CAD51088.1"/>
    <property type="molecule type" value="Genomic_DNA"/>
</dbReference>
<dbReference type="RefSeq" id="XP_001349239.1">
    <property type="nucleotide sequence ID" value="XM_001349203.1"/>
</dbReference>
<dbReference type="SMR" id="Q8IBB8"/>
<dbReference type="BioGRID" id="1210092">
    <property type="interactions" value="1"/>
</dbReference>
<dbReference type="FunCoup" id="Q8IBB8">
    <property type="interactions" value="3"/>
</dbReference>
<dbReference type="IntAct" id="Q8IBB8">
    <property type="interactions" value="1"/>
</dbReference>
<dbReference type="STRING" id="36329.Q8IBB8"/>
<dbReference type="PaxDb" id="5833-MAL8P1.12"/>
<dbReference type="EnsemblProtists" id="CAD51088">
    <property type="protein sequence ID" value="CAD51088"/>
    <property type="gene ID" value="PF3D7_0828700"/>
</dbReference>
<dbReference type="KEGG" id="pfa:PF3D7_0828700"/>
<dbReference type="VEuPathDB" id="PlasmoDB:PF3D7_0828700"/>
<dbReference type="HOGENOM" id="CLU_293979_0_0_1"/>
<dbReference type="InParanoid" id="Q8IBB8"/>
<dbReference type="OMA" id="NINDEIH"/>
<dbReference type="OrthoDB" id="10259720at2759"/>
<dbReference type="PhylomeDB" id="Q8IBB8"/>
<dbReference type="Proteomes" id="UP000001450">
    <property type="component" value="Chromosome 8"/>
</dbReference>
<dbReference type="GO" id="GO:0005930">
    <property type="term" value="C:axoneme"/>
    <property type="evidence" value="ECO:0000318"/>
    <property type="project" value="GO_Central"/>
</dbReference>
<dbReference type="GO" id="GO:0005737">
    <property type="term" value="C:cytoplasm"/>
    <property type="evidence" value="ECO:0000303"/>
    <property type="project" value="UniProtKB"/>
</dbReference>
<dbReference type="GO" id="GO:0003341">
    <property type="term" value="P:cilium movement"/>
    <property type="evidence" value="ECO:0000318"/>
    <property type="project" value="GO_Central"/>
</dbReference>
<dbReference type="GO" id="GO:0060285">
    <property type="term" value="P:cilium-dependent cell motility"/>
    <property type="evidence" value="ECO:0000318"/>
    <property type="project" value="GO_Central"/>
</dbReference>
<dbReference type="GO" id="GO:0036159">
    <property type="term" value="P:inner dynein arm assembly"/>
    <property type="evidence" value="ECO:0000318"/>
    <property type="project" value="GO_Central"/>
</dbReference>
<dbReference type="FunFam" id="1.10.287.1490:FF:000017">
    <property type="entry name" value="Repeat organellar protein"/>
    <property type="match status" value="1"/>
</dbReference>
<dbReference type="Gene3D" id="1.10.287.1490">
    <property type="match status" value="1"/>
</dbReference>
<dbReference type="InterPro" id="IPR033290">
    <property type="entry name" value="CCDC39"/>
</dbReference>
<dbReference type="PANTHER" id="PTHR18962">
    <property type="entry name" value="COILED-COIL DOMAIN-CONTAINING PROTEIN 39"/>
    <property type="match status" value="1"/>
</dbReference>
<dbReference type="PANTHER" id="PTHR18962:SF0">
    <property type="entry name" value="COILED-COIL DOMAIN-CONTAINING PROTEIN 39"/>
    <property type="match status" value="1"/>
</dbReference>
<dbReference type="Pfam" id="PF24161">
    <property type="entry name" value="CCDC39"/>
    <property type="match status" value="1"/>
</dbReference>
<gene>
    <name type="ORF">MAL8P1.12</name>
</gene>
<feature type="chain" id="PRO_0000388768" description="Uncharacterized protein MAL8P1.12">
    <location>
        <begin position="1"/>
        <end position="1033"/>
    </location>
</feature>
<feature type="coiled-coil region" evidence="1">
    <location>
        <begin position="212"/>
        <end position="326"/>
    </location>
</feature>
<feature type="coiled-coil region" evidence="1">
    <location>
        <begin position="405"/>
        <end position="582"/>
    </location>
</feature>
<feature type="coiled-coil region" evidence="1">
    <location>
        <begin position="615"/>
        <end position="771"/>
    </location>
</feature>
<feature type="coiled-coil region" evidence="1">
    <location>
        <begin position="797"/>
        <end position="1019"/>
    </location>
</feature>
<keyword id="KW-0175">Coiled coil</keyword>
<keyword id="KW-0477">Merozoite</keyword>
<keyword id="KW-1185">Reference proteome</keyword>
<reference key="1">
    <citation type="journal article" date="2002" name="Nature">
        <title>Genome sequence of the human malaria parasite Plasmodium falciparum.</title>
        <authorList>
            <person name="Gardner M.J."/>
            <person name="Hall N."/>
            <person name="Fung E."/>
            <person name="White O."/>
            <person name="Berriman M."/>
            <person name="Hyman R.W."/>
            <person name="Carlton J.M."/>
            <person name="Pain A."/>
            <person name="Nelson K.E."/>
            <person name="Bowman S."/>
            <person name="Paulsen I.T."/>
            <person name="James K.D."/>
            <person name="Eisen J.A."/>
            <person name="Rutherford K.M."/>
            <person name="Salzberg S.L."/>
            <person name="Craig A."/>
            <person name="Kyes S."/>
            <person name="Chan M.-S."/>
            <person name="Nene V."/>
            <person name="Shallom S.J."/>
            <person name="Suh B."/>
            <person name="Peterson J."/>
            <person name="Angiuoli S."/>
            <person name="Pertea M."/>
            <person name="Allen J."/>
            <person name="Selengut J."/>
            <person name="Haft D."/>
            <person name="Mather M.W."/>
            <person name="Vaidya A.B."/>
            <person name="Martin D.M.A."/>
            <person name="Fairlamb A.H."/>
            <person name="Fraunholz M.J."/>
            <person name="Roos D.S."/>
            <person name="Ralph S.A."/>
            <person name="McFadden G.I."/>
            <person name="Cummings L.M."/>
            <person name="Subramanian G.M."/>
            <person name="Mungall C."/>
            <person name="Venter J.C."/>
            <person name="Carucci D.J."/>
            <person name="Hoffman S.L."/>
            <person name="Newbold C."/>
            <person name="Davis R.W."/>
            <person name="Fraser C.M."/>
            <person name="Barrell B.G."/>
        </authorList>
    </citation>
    <scope>NUCLEOTIDE SEQUENCE [LARGE SCALE GENOMIC DNA]</scope>
    <source>
        <strain>3D7</strain>
    </source>
</reference>
<reference evidence="4" key="2">
    <citation type="journal article" date="2002" name="Nature">
        <title>Sequence of Plasmodium falciparum chromosomes 1, 3-9 and 13.</title>
        <authorList>
            <person name="Hall N."/>
            <person name="Pain A."/>
            <person name="Berriman M."/>
            <person name="Churcher C.M."/>
            <person name="Harris B."/>
            <person name="Harris D."/>
            <person name="Mungall K.L."/>
            <person name="Bowman S."/>
            <person name="Atkin R."/>
            <person name="Baker S."/>
            <person name="Barron A."/>
            <person name="Brooks K."/>
            <person name="Buckee C.O."/>
            <person name="Burrows C."/>
            <person name="Cherevach I."/>
            <person name="Chillingworth C."/>
            <person name="Chillingworth T."/>
            <person name="Christodoulou Z."/>
            <person name="Clark L."/>
            <person name="Clark R."/>
            <person name="Corton C."/>
            <person name="Cronin A."/>
            <person name="Davies R.M."/>
            <person name="Davis P."/>
            <person name="Dear P."/>
            <person name="Dearden F."/>
            <person name="Doggett J."/>
            <person name="Feltwell T."/>
            <person name="Goble A."/>
            <person name="Goodhead I."/>
            <person name="Gwilliam R."/>
            <person name="Hamlin N."/>
            <person name="Hance Z."/>
            <person name="Harper D."/>
            <person name="Hauser H."/>
            <person name="Hornsby T."/>
            <person name="Holroyd S."/>
            <person name="Horrocks P."/>
            <person name="Humphray S."/>
            <person name="Jagels K."/>
            <person name="James K.D."/>
            <person name="Johnson D."/>
            <person name="Kerhornou A."/>
            <person name="Knights A."/>
            <person name="Konfortov B."/>
            <person name="Kyes S."/>
            <person name="Larke N."/>
            <person name="Lawson D."/>
            <person name="Lennard N."/>
            <person name="Line A."/>
            <person name="Maddison M."/>
            <person name="Mclean J."/>
            <person name="Mooney P."/>
            <person name="Moule S."/>
            <person name="Murphy L."/>
            <person name="Oliver K."/>
            <person name="Ormond D."/>
            <person name="Price C."/>
            <person name="Quail M.A."/>
            <person name="Rabbinowitsch E."/>
            <person name="Rajandream M.A."/>
            <person name="Rutter S."/>
            <person name="Rutherford K.M."/>
            <person name="Sanders M."/>
            <person name="Simmonds M."/>
            <person name="Seeger K."/>
            <person name="Sharp S."/>
            <person name="Smith R."/>
            <person name="Squares R."/>
            <person name="Squares S."/>
            <person name="Stevens K."/>
            <person name="Taylor K."/>
            <person name="Tivey A."/>
            <person name="Unwin L."/>
            <person name="Whitehead S."/>
            <person name="Woodward J.R."/>
            <person name="Sulston J.E."/>
            <person name="Craig A."/>
            <person name="Newbold C."/>
            <person name="Barrell B.G."/>
        </authorList>
    </citation>
    <scope>NUCLEOTIDE SEQUENCE [LARGE SCALE GENOMIC DNA]</scope>
    <source>
        <strain>3D7</strain>
    </source>
</reference>
<reference evidence="3" key="3">
    <citation type="journal article" date="2007" name="PLoS ONE">
        <title>Rapid identification of malaria vaccine candidates based on alpha-helical coiled coil protein motif.</title>
        <authorList>
            <person name="Villard V."/>
            <person name="Agak G.W."/>
            <person name="Frank G."/>
            <person name="Jafarshad A."/>
            <person name="Servis C."/>
            <person name="Nebie I."/>
            <person name="Sirima S.B."/>
            <person name="Felger I."/>
            <person name="Arevalo-Herrera M."/>
            <person name="Herrera S."/>
            <person name="Heitz F."/>
            <person name="Baecker V."/>
            <person name="Druilhe P."/>
            <person name="Kajava A.V."/>
            <person name="Corradin G."/>
        </authorList>
    </citation>
    <scope>SYNTHESIS OF 860-914</scope>
    <scope>POSSIBLE CANDIDATE MALARIA EPITOPE</scope>
</reference>
<organism>
    <name type="scientific">Plasmodium falciparum (isolate 3D7)</name>
    <dbReference type="NCBI Taxonomy" id="36329"/>
    <lineage>
        <taxon>Eukaryota</taxon>
        <taxon>Sar</taxon>
        <taxon>Alveolata</taxon>
        <taxon>Apicomplexa</taxon>
        <taxon>Aconoidasida</taxon>
        <taxon>Haemosporida</taxon>
        <taxon>Plasmodiidae</taxon>
        <taxon>Plasmodium</taxon>
        <taxon>Plasmodium (Laverania)</taxon>
    </lineage>
</organism>
<accession>Q8IBB8</accession>
<comment type="biotechnology">
    <text evidence="2">Possible candidate for an effective malaria vaccine as determined by epitope response in sera.</text>
</comment>
<name>YPF15_PLAF7</name>
<proteinExistence type="evidence at protein level"/>
<protein>
    <recommendedName>
        <fullName evidence="4">Uncharacterized protein MAL8P1.12</fullName>
    </recommendedName>
</protein>
<evidence type="ECO:0000255" key="1"/>
<evidence type="ECO:0000269" key="2">
    <source>
    </source>
</evidence>
<evidence type="ECO:0000305" key="3"/>
<evidence type="ECO:0000312" key="4">
    <source>
        <dbReference type="EMBL" id="CAD51088.1"/>
    </source>
</evidence>